<name>KRP4_ARATH</name>
<reference key="1">
    <citation type="journal article" date="2001" name="Plant Cell">
        <title>Functional analysis of cyclin-dependent kinase inhibitors of Arabidopsis.</title>
        <authorList>
            <person name="de Veylder L."/>
            <person name="Beeckman T."/>
            <person name="Beemster G.T.S."/>
            <person name="Krols L."/>
            <person name="Terras F."/>
            <person name="Landrieu I."/>
            <person name="van der Schueren E."/>
            <person name="Maes S."/>
            <person name="Naudts M."/>
            <person name="Inze D."/>
        </authorList>
    </citation>
    <scope>NUCLEOTIDE SEQUENCE [MRNA] (ISOFORM 2)</scope>
    <scope>TISSUE SPECIFICITY</scope>
    <scope>INTERACTION WITH CDKA-1 AND CYCD4-1</scope>
    <source>
        <strain>cv. Columbia</strain>
    </source>
</reference>
<reference key="2">
    <citation type="submission" date="1999-01" db="EMBL/GenBank/DDBJ databases">
        <title>A novel cyclin-dependent kinase inhibitor (ACK2) interacting with G1 specific cyclin.</title>
        <authorList>
            <person name="Park S.C."/>
            <person name="Cho J.W."/>
        </authorList>
    </citation>
    <scope>NUCLEOTIDE SEQUENCE [MRNA] (ISOFORM 1)</scope>
</reference>
<reference key="3">
    <citation type="journal article" date="1999" name="Nature">
        <title>Sequence and analysis of chromosome 2 of the plant Arabidopsis thaliana.</title>
        <authorList>
            <person name="Lin X."/>
            <person name="Kaul S."/>
            <person name="Rounsley S.D."/>
            <person name="Shea T.P."/>
            <person name="Benito M.-I."/>
            <person name="Town C.D."/>
            <person name="Fujii C.Y."/>
            <person name="Mason T.M."/>
            <person name="Bowman C.L."/>
            <person name="Barnstead M.E."/>
            <person name="Feldblyum T.V."/>
            <person name="Buell C.R."/>
            <person name="Ketchum K.A."/>
            <person name="Lee J.J."/>
            <person name="Ronning C.M."/>
            <person name="Koo H.L."/>
            <person name="Moffat K.S."/>
            <person name="Cronin L.A."/>
            <person name="Shen M."/>
            <person name="Pai G."/>
            <person name="Van Aken S."/>
            <person name="Umayam L."/>
            <person name="Tallon L.J."/>
            <person name="Gill J.E."/>
            <person name="Adams M.D."/>
            <person name="Carrera A.J."/>
            <person name="Creasy T.H."/>
            <person name="Goodman H.M."/>
            <person name="Somerville C.R."/>
            <person name="Copenhaver G.P."/>
            <person name="Preuss D."/>
            <person name="Nierman W.C."/>
            <person name="White O."/>
            <person name="Eisen J.A."/>
            <person name="Salzberg S.L."/>
            <person name="Fraser C.M."/>
            <person name="Venter J.C."/>
        </authorList>
    </citation>
    <scope>NUCLEOTIDE SEQUENCE [LARGE SCALE GENOMIC DNA]</scope>
    <source>
        <strain>cv. Columbia</strain>
    </source>
</reference>
<reference key="4">
    <citation type="journal article" date="2017" name="Plant J.">
        <title>Araport11: a complete reannotation of the Arabidopsis thaliana reference genome.</title>
        <authorList>
            <person name="Cheng C.Y."/>
            <person name="Krishnakumar V."/>
            <person name="Chan A.P."/>
            <person name="Thibaud-Nissen F."/>
            <person name="Schobel S."/>
            <person name="Town C.D."/>
        </authorList>
    </citation>
    <scope>GENOME REANNOTATION</scope>
    <source>
        <strain>cv. Columbia</strain>
    </source>
</reference>
<reference key="5">
    <citation type="journal article" date="2002" name="Science">
        <title>Functional annotation of a full-length Arabidopsis cDNA collection.</title>
        <authorList>
            <person name="Seki M."/>
            <person name="Narusaka M."/>
            <person name="Kamiya A."/>
            <person name="Ishida J."/>
            <person name="Satou M."/>
            <person name="Sakurai T."/>
            <person name="Nakajima M."/>
            <person name="Enju A."/>
            <person name="Akiyama K."/>
            <person name="Oono Y."/>
            <person name="Muramatsu M."/>
            <person name="Hayashizaki Y."/>
            <person name="Kawai J."/>
            <person name="Carninci P."/>
            <person name="Itoh M."/>
            <person name="Ishii Y."/>
            <person name="Arakawa T."/>
            <person name="Shibata K."/>
            <person name="Shinagawa A."/>
            <person name="Shinozaki K."/>
        </authorList>
    </citation>
    <scope>NUCLEOTIDE SEQUENCE [LARGE SCALE MRNA] (ISOFORM 2)</scope>
    <source>
        <strain>cv. Columbia</strain>
    </source>
</reference>
<reference key="6">
    <citation type="journal article" date="2006" name="FEBS Lett.">
        <title>Arabidopsis KRPs have distinct inhibitory activity toward cyclin D2-associated kinases, including plant-specific B-type cyclin-dependent kinase.</title>
        <authorList>
            <person name="Nakai T."/>
            <person name="Kato K."/>
            <person name="Shinmyo A."/>
            <person name="Sekine M."/>
        </authorList>
    </citation>
    <scope>FUNCTION</scope>
</reference>
<reference key="7">
    <citation type="journal article" date="2007" name="Plant Cell Rep.">
        <title>Arabidopsis cyclin-dependent kinase inhibitors are nuclear-localized and show different localization patterns within the nucleoplasm.</title>
        <authorList>
            <person name="Bird D.A."/>
            <person name="Buruiana M.M."/>
            <person name="Zhou Y."/>
            <person name="Fowke L.C."/>
            <person name="Wang H."/>
        </authorList>
    </citation>
    <scope>SUBCELLULAR LOCATION</scope>
</reference>
<reference key="8">
    <citation type="journal article" date="2008" name="Nature">
        <title>Control of plant germline proliferation by SCF(FBL17) degradation of cell cycle inhibitors.</title>
        <authorList>
            <person name="Kim H.J."/>
            <person name="Oh S.A."/>
            <person name="Brownfield L."/>
            <person name="Hong S.H."/>
            <person name="Ryu H."/>
            <person name="Hwang I."/>
            <person name="Twell D."/>
            <person name="Nam H.G."/>
        </authorList>
    </citation>
    <scope>INTERACTION WITH FBL17</scope>
</reference>
<feature type="chain" id="PRO_0000294093" description="Cyclin-dependent kinase inhibitor 4">
    <location>
        <begin position="1"/>
        <end position="289"/>
    </location>
</feature>
<feature type="region of interest" description="Disordered" evidence="1">
    <location>
        <begin position="1"/>
        <end position="31"/>
    </location>
</feature>
<feature type="region of interest" description="Disordered" evidence="1">
    <location>
        <begin position="56"/>
        <end position="160"/>
    </location>
</feature>
<feature type="region of interest" description="Disordered" evidence="1">
    <location>
        <begin position="227"/>
        <end position="248"/>
    </location>
</feature>
<feature type="compositionally biased region" description="Gly residues" evidence="1">
    <location>
        <begin position="13"/>
        <end position="28"/>
    </location>
</feature>
<feature type="compositionally biased region" description="Low complexity" evidence="1">
    <location>
        <begin position="56"/>
        <end position="80"/>
    </location>
</feature>
<feature type="compositionally biased region" description="Polar residues" evidence="1">
    <location>
        <begin position="134"/>
        <end position="144"/>
    </location>
</feature>
<feature type="splice variant" id="VSP_026589" description="In isoform 2." evidence="6 7">
    <location>
        <begin position="193"/>
        <end position="195"/>
    </location>
</feature>
<feature type="sequence conflict" description="In Ref. 5; BAC42243." evidence="8" ref="5">
    <original>K</original>
    <variation>R</variation>
    <location>
        <position position="90"/>
    </location>
</feature>
<feature type="sequence conflict" description="In Ref. 5; BAC42243." evidence="8" ref="5">
    <original>D</original>
    <variation>G</variation>
    <location>
        <position position="250"/>
    </location>
</feature>
<accession>Q8GYJ3</accession>
<accession>O48846</accession>
<accession>Q94CM0</accession>
<accession>Q9FR83</accession>
<protein>
    <recommendedName>
        <fullName>Cyclin-dependent kinase inhibitor 4</fullName>
    </recommendedName>
    <alternativeName>
        <fullName>Inhibitor/interactor of CDK protein 7</fullName>
    </alternativeName>
    <alternativeName>
        <fullName>KIP-related protein 4</fullName>
    </alternativeName>
</protein>
<keyword id="KW-0025">Alternative splicing</keyword>
<keyword id="KW-0131">Cell cycle</keyword>
<keyword id="KW-0539">Nucleus</keyword>
<keyword id="KW-0649">Protein kinase inhibitor</keyword>
<keyword id="KW-1185">Reference proteome</keyword>
<evidence type="ECO:0000256" key="1">
    <source>
        <dbReference type="SAM" id="MobiDB-lite"/>
    </source>
</evidence>
<evidence type="ECO:0000269" key="2">
    <source>
    </source>
</evidence>
<evidence type="ECO:0000269" key="3">
    <source>
    </source>
</evidence>
<evidence type="ECO:0000269" key="4">
    <source>
    </source>
</evidence>
<evidence type="ECO:0000269" key="5">
    <source>
    </source>
</evidence>
<evidence type="ECO:0000303" key="6">
    <source>
    </source>
</evidence>
<evidence type="ECO:0000303" key="7">
    <source>
    </source>
</evidence>
<evidence type="ECO:0000305" key="8"/>
<proteinExistence type="evidence at protein level"/>
<organism>
    <name type="scientific">Arabidopsis thaliana</name>
    <name type="common">Mouse-ear cress</name>
    <dbReference type="NCBI Taxonomy" id="3702"/>
    <lineage>
        <taxon>Eukaryota</taxon>
        <taxon>Viridiplantae</taxon>
        <taxon>Streptophyta</taxon>
        <taxon>Embryophyta</taxon>
        <taxon>Tracheophyta</taxon>
        <taxon>Spermatophyta</taxon>
        <taxon>Magnoliopsida</taxon>
        <taxon>eudicotyledons</taxon>
        <taxon>Gunneridae</taxon>
        <taxon>Pentapetalae</taxon>
        <taxon>rosids</taxon>
        <taxon>malvids</taxon>
        <taxon>Brassicales</taxon>
        <taxon>Brassicaceae</taxon>
        <taxon>Camelineae</taxon>
        <taxon>Arabidopsis</taxon>
    </lineage>
</organism>
<comment type="function">
    <text evidence="3">Binds and inhibits CYCD2-1/CDKA-1 complex kinase activity. May target specifically CDKA-1.</text>
</comment>
<comment type="subunit">
    <text evidence="2 5">Specifically interacts with CDKA-1, but not with CDKB1-1. Interacts with CYCD4-1. Binds to FBL17.</text>
</comment>
<comment type="interaction">
    <interactant intactId="EBI-1253225">
        <id>Q8GYJ3</id>
    </interactant>
    <interactant intactId="EBI-371713">
        <id>P24100</id>
        <label>CDKA-1</label>
    </interactant>
    <organismsDiffer>false</organismsDiffer>
    <experiments>4</experiments>
</comment>
<comment type="subcellular location">
    <subcellularLocation>
        <location evidence="4">Nucleus</location>
        <location evidence="4">Nucleoplasm</location>
    </subcellularLocation>
    <text>Distributed in a ponctuate pattern.</text>
</comment>
<comment type="alternative products">
    <event type="alternative splicing"/>
    <isoform>
        <id>Q8GYJ3-1</id>
        <name>1</name>
        <sequence type="displayed"/>
    </isoform>
    <isoform>
        <id>Q8GYJ3-2</id>
        <name>2</name>
        <sequence type="described" ref="VSP_026589"/>
    </isoform>
</comment>
<comment type="tissue specificity">
    <text evidence="2">Expressed in leaves and flowers and at lower levels in roots.</text>
</comment>
<comment type="miscellaneous">
    <molecule>Isoform 2</molecule>
    <text evidence="8">May be due to competing acceptor splice site.</text>
</comment>
<comment type="similarity">
    <text evidence="8">Belongs to the CDI family. ICK/KRP subfamily.</text>
</comment>
<sequence length="289" mass="32068">MGKYIRKSKIDGAGAGAGGGGGGGGGGESSIALMDVVSPSSSSSLGVLTRAKSLALQQQQQRCLLQKPSSPSSLPPTSASPNPPSKQKMKKKQQQMNDCGSYLQLRSRRLQKKPPIVVIRSTKRRKQQRRNETCGRNPNPRSNLDSIRGDGSRSDSVSESVVFGKDKDLISEINKDPTFGQNFFDLEEEHTQSFNRTTRESTPCSLIRRPEIMTTPGSSTKLNICVSESNQREDSLSRSHRRRPTTPEMDEFFSGAEEEQQKQFIEKYNFDPVNEQPLPGRFEWTKVDD</sequence>
<dbReference type="EMBL" id="AJ301555">
    <property type="protein sequence ID" value="CAC41618.1"/>
    <property type="molecule type" value="mRNA"/>
</dbReference>
<dbReference type="EMBL" id="AF123315">
    <property type="protein sequence ID" value="AAG41215.1"/>
    <property type="molecule type" value="mRNA"/>
</dbReference>
<dbReference type="EMBL" id="AC003974">
    <property type="protein sequence ID" value="AAC04492.2"/>
    <property type="molecule type" value="Genomic_DNA"/>
</dbReference>
<dbReference type="EMBL" id="CP002685">
    <property type="protein sequence ID" value="AEC08727.1"/>
    <property type="molecule type" value="Genomic_DNA"/>
</dbReference>
<dbReference type="EMBL" id="CP002685">
    <property type="protein sequence ID" value="AEC08728.1"/>
    <property type="molecule type" value="Genomic_DNA"/>
</dbReference>
<dbReference type="EMBL" id="AK117586">
    <property type="protein sequence ID" value="BAC42243.1"/>
    <property type="molecule type" value="mRNA"/>
</dbReference>
<dbReference type="PIR" id="T00797">
    <property type="entry name" value="T00797"/>
</dbReference>
<dbReference type="RefSeq" id="NP_565750.1">
    <molecule id="Q8GYJ3-1"/>
    <property type="nucleotide sequence ID" value="NM_128830.4"/>
</dbReference>
<dbReference type="RefSeq" id="NP_850196.1">
    <molecule id="Q8GYJ3-2"/>
    <property type="nucleotide sequence ID" value="NM_179865.2"/>
</dbReference>
<dbReference type="BioGRID" id="3178">
    <property type="interactions" value="40"/>
</dbReference>
<dbReference type="DIP" id="DIP-38682N"/>
<dbReference type="FunCoup" id="Q8GYJ3">
    <property type="interactions" value="57"/>
</dbReference>
<dbReference type="IntAct" id="Q8GYJ3">
    <property type="interactions" value="17"/>
</dbReference>
<dbReference type="STRING" id="3702.Q8GYJ3"/>
<dbReference type="iPTMnet" id="Q8GYJ3"/>
<dbReference type="PaxDb" id="3702-AT2G32710.1"/>
<dbReference type="ProteomicsDB" id="237108">
    <molecule id="Q8GYJ3-1"/>
</dbReference>
<dbReference type="EnsemblPlants" id="AT2G32710.1">
    <molecule id="Q8GYJ3-1"/>
    <property type="protein sequence ID" value="AT2G32710.1"/>
    <property type="gene ID" value="AT2G32710"/>
</dbReference>
<dbReference type="EnsemblPlants" id="AT2G32710.2">
    <molecule id="Q8GYJ3-2"/>
    <property type="protein sequence ID" value="AT2G32710.2"/>
    <property type="gene ID" value="AT2G32710"/>
</dbReference>
<dbReference type="GeneID" id="817831"/>
<dbReference type="Gramene" id="AT2G32710.1">
    <molecule id="Q8GYJ3-1"/>
    <property type="protein sequence ID" value="AT2G32710.1"/>
    <property type="gene ID" value="AT2G32710"/>
</dbReference>
<dbReference type="Gramene" id="AT2G32710.2">
    <molecule id="Q8GYJ3-2"/>
    <property type="protein sequence ID" value="AT2G32710.2"/>
    <property type="gene ID" value="AT2G32710"/>
</dbReference>
<dbReference type="KEGG" id="ath:AT2G32710"/>
<dbReference type="Araport" id="AT2G32710"/>
<dbReference type="TAIR" id="AT2G32710">
    <property type="gene designation" value="KRP4"/>
</dbReference>
<dbReference type="eggNOG" id="ENOG502QXA1">
    <property type="taxonomic scope" value="Eukaryota"/>
</dbReference>
<dbReference type="InParanoid" id="Q8GYJ3"/>
<dbReference type="OMA" id="RNIPTTH"/>
<dbReference type="OrthoDB" id="6373236at2759"/>
<dbReference type="PhylomeDB" id="Q8GYJ3"/>
<dbReference type="PRO" id="PR:Q8GYJ3"/>
<dbReference type="Proteomes" id="UP000006548">
    <property type="component" value="Chromosome 2"/>
</dbReference>
<dbReference type="ExpressionAtlas" id="Q8GYJ3">
    <property type="expression patterns" value="baseline and differential"/>
</dbReference>
<dbReference type="GO" id="GO:0005737">
    <property type="term" value="C:cytoplasm"/>
    <property type="evidence" value="ECO:0000314"/>
    <property type="project" value="TAIR"/>
</dbReference>
<dbReference type="GO" id="GO:0005654">
    <property type="term" value="C:nucleoplasm"/>
    <property type="evidence" value="ECO:0007669"/>
    <property type="project" value="UniProtKB-SubCell"/>
</dbReference>
<dbReference type="GO" id="GO:0005634">
    <property type="term" value="C:nucleus"/>
    <property type="evidence" value="ECO:0000314"/>
    <property type="project" value="TAIR"/>
</dbReference>
<dbReference type="GO" id="GO:0004861">
    <property type="term" value="F:cyclin-dependent protein serine/threonine kinase inhibitor activity"/>
    <property type="evidence" value="ECO:0000316"/>
    <property type="project" value="TAIR"/>
</dbReference>
<dbReference type="GO" id="GO:0045786">
    <property type="term" value="P:negative regulation of cell cycle"/>
    <property type="evidence" value="ECO:0000304"/>
    <property type="project" value="TAIR"/>
</dbReference>
<dbReference type="GO" id="GO:0045736">
    <property type="term" value="P:negative regulation of cyclin-dependent protein serine/threonine kinase activity"/>
    <property type="evidence" value="ECO:0000314"/>
    <property type="project" value="TAIR"/>
</dbReference>
<dbReference type="FunFam" id="4.10.365.10:FF:000004">
    <property type="entry name" value="Cyclin-dependent kinase inhibitor 4"/>
    <property type="match status" value="1"/>
</dbReference>
<dbReference type="Gene3D" id="4.10.365.10">
    <property type="entry name" value="p27"/>
    <property type="match status" value="1"/>
</dbReference>
<dbReference type="InterPro" id="IPR003175">
    <property type="entry name" value="CDI_dom"/>
</dbReference>
<dbReference type="InterPro" id="IPR044898">
    <property type="entry name" value="CDI_dom_sf"/>
</dbReference>
<dbReference type="InterPro" id="IPR044275">
    <property type="entry name" value="KRP"/>
</dbReference>
<dbReference type="PANTHER" id="PTHR46776">
    <property type="entry name" value="CYCLIN-DEPENDENT KINASE INHIBITOR 4-RELATED"/>
    <property type="match status" value="1"/>
</dbReference>
<dbReference type="Pfam" id="PF02234">
    <property type="entry name" value="CDI"/>
    <property type="match status" value="1"/>
</dbReference>
<dbReference type="PIRSF" id="PIRSF017811">
    <property type="entry name" value="CDK_inhib_pln"/>
    <property type="match status" value="1"/>
</dbReference>
<gene>
    <name type="primary">KRP4</name>
    <name type="synonym">ACK2</name>
    <name type="synonym">ICK7</name>
    <name type="ordered locus">At2g32710</name>
    <name type="ORF">F24L7.15</name>
</gene>